<gene>
    <name evidence="1" type="primary">hcp</name>
    <name type="ordered locus">Ecok1_07570</name>
    <name type="ORF">APECO1_1221</name>
</gene>
<organism>
    <name type="scientific">Escherichia coli O1:K1 / APEC</name>
    <dbReference type="NCBI Taxonomy" id="405955"/>
    <lineage>
        <taxon>Bacteria</taxon>
        <taxon>Pseudomonadati</taxon>
        <taxon>Pseudomonadota</taxon>
        <taxon>Gammaproteobacteria</taxon>
        <taxon>Enterobacterales</taxon>
        <taxon>Enterobacteriaceae</taxon>
        <taxon>Escherichia</taxon>
    </lineage>
</organism>
<accession>A1A9B1</accession>
<comment type="function">
    <text evidence="1">Catalyzes the reduction of hydroxylamine to form NH(3) and H(2)O.</text>
</comment>
<comment type="catalytic activity">
    <reaction evidence="1">
        <text>A + NH4(+) + H2O = hydroxylamine + AH2 + H(+)</text>
        <dbReference type="Rhea" id="RHEA:22052"/>
        <dbReference type="ChEBI" id="CHEBI:13193"/>
        <dbReference type="ChEBI" id="CHEBI:15377"/>
        <dbReference type="ChEBI" id="CHEBI:15378"/>
        <dbReference type="ChEBI" id="CHEBI:15429"/>
        <dbReference type="ChEBI" id="CHEBI:17499"/>
        <dbReference type="ChEBI" id="CHEBI:28938"/>
        <dbReference type="EC" id="1.7.99.1"/>
    </reaction>
</comment>
<comment type="cofactor">
    <cofactor evidence="1">
        <name>[2Fe-2S] cluster</name>
        <dbReference type="ChEBI" id="CHEBI:190135"/>
    </cofactor>
    <text evidence="1">Binds 1 [2Fe-2S] cluster.</text>
</comment>
<comment type="cofactor">
    <cofactor evidence="1">
        <name>hybrid [4Fe-2O-2S] cluster</name>
        <dbReference type="ChEBI" id="CHEBI:60519"/>
    </cofactor>
    <text evidence="1">Binds 1 hybrid [4Fe-2O-2S] cluster.</text>
</comment>
<comment type="subcellular location">
    <subcellularLocation>
        <location evidence="1">Cytoplasm</location>
    </subcellularLocation>
</comment>
<comment type="similarity">
    <text evidence="1">Belongs to the HCP family.</text>
</comment>
<keyword id="KW-0001">2Fe-2S</keyword>
<keyword id="KW-0963">Cytoplasm</keyword>
<keyword id="KW-0408">Iron</keyword>
<keyword id="KW-0411">Iron-sulfur</keyword>
<keyword id="KW-0479">Metal-binding</keyword>
<keyword id="KW-0560">Oxidoreductase</keyword>
<keyword id="KW-1185">Reference proteome</keyword>
<evidence type="ECO:0000255" key="1">
    <source>
        <dbReference type="HAMAP-Rule" id="MF_00069"/>
    </source>
</evidence>
<protein>
    <recommendedName>
        <fullName evidence="1">Hydroxylamine reductase</fullName>
        <ecNumber evidence="1">1.7.99.1</ecNumber>
    </recommendedName>
    <alternativeName>
        <fullName evidence="1">Hybrid-cluster protein</fullName>
        <shortName evidence="1">HCP</shortName>
    </alternativeName>
    <alternativeName>
        <fullName evidence="1">Prismane protein</fullName>
    </alternativeName>
</protein>
<reference key="1">
    <citation type="journal article" date="2007" name="J. Bacteriol.">
        <title>The genome sequence of avian pathogenic Escherichia coli strain O1:K1:H7 shares strong similarities with human extraintestinal pathogenic E. coli genomes.</title>
        <authorList>
            <person name="Johnson T.J."/>
            <person name="Kariyawasam S."/>
            <person name="Wannemuehler Y."/>
            <person name="Mangiamele P."/>
            <person name="Johnson S.J."/>
            <person name="Doetkott C."/>
            <person name="Skyberg J.A."/>
            <person name="Lynne A.M."/>
            <person name="Johnson J.R."/>
            <person name="Nolan L.K."/>
        </authorList>
    </citation>
    <scope>NUCLEOTIDE SEQUENCE [LARGE SCALE GENOMIC DNA]</scope>
</reference>
<feature type="chain" id="PRO_1000071174" description="Hydroxylamine reductase">
    <location>
        <begin position="1"/>
        <end position="552"/>
    </location>
</feature>
<feature type="binding site" evidence="1">
    <location>
        <position position="5"/>
    </location>
    <ligand>
        <name>[2Fe-2S] cluster</name>
        <dbReference type="ChEBI" id="CHEBI:190135"/>
    </ligand>
</feature>
<feature type="binding site" evidence="1">
    <location>
        <position position="8"/>
    </location>
    <ligand>
        <name>[2Fe-2S] cluster</name>
        <dbReference type="ChEBI" id="CHEBI:190135"/>
    </ligand>
</feature>
<feature type="binding site" evidence="1">
    <location>
        <position position="20"/>
    </location>
    <ligand>
        <name>[2Fe-2S] cluster</name>
        <dbReference type="ChEBI" id="CHEBI:190135"/>
    </ligand>
</feature>
<feature type="binding site" evidence="1">
    <location>
        <position position="27"/>
    </location>
    <ligand>
        <name>[2Fe-2S] cluster</name>
        <dbReference type="ChEBI" id="CHEBI:190135"/>
    </ligand>
</feature>
<feature type="binding site" evidence="1">
    <location>
        <position position="251"/>
    </location>
    <ligand>
        <name>hybrid [4Fe-2O-2S] cluster</name>
        <dbReference type="ChEBI" id="CHEBI:60519"/>
    </ligand>
</feature>
<feature type="binding site" evidence="1">
    <location>
        <position position="275"/>
    </location>
    <ligand>
        <name>hybrid [4Fe-2O-2S] cluster</name>
        <dbReference type="ChEBI" id="CHEBI:60519"/>
    </ligand>
</feature>
<feature type="binding site" evidence="1">
    <location>
        <position position="319"/>
    </location>
    <ligand>
        <name>hybrid [4Fe-2O-2S] cluster</name>
        <dbReference type="ChEBI" id="CHEBI:60519"/>
    </ligand>
</feature>
<feature type="binding site" description="via persulfide group" evidence="1">
    <location>
        <position position="407"/>
    </location>
    <ligand>
        <name>hybrid [4Fe-2O-2S] cluster</name>
        <dbReference type="ChEBI" id="CHEBI:60519"/>
    </ligand>
</feature>
<feature type="binding site" evidence="1">
    <location>
        <position position="435"/>
    </location>
    <ligand>
        <name>hybrid [4Fe-2O-2S] cluster</name>
        <dbReference type="ChEBI" id="CHEBI:60519"/>
    </ligand>
</feature>
<feature type="binding site" evidence="1">
    <location>
        <position position="460"/>
    </location>
    <ligand>
        <name>hybrid [4Fe-2O-2S] cluster</name>
        <dbReference type="ChEBI" id="CHEBI:60519"/>
    </ligand>
</feature>
<feature type="binding site" evidence="1">
    <location>
        <position position="494"/>
    </location>
    <ligand>
        <name>hybrid [4Fe-2O-2S] cluster</name>
        <dbReference type="ChEBI" id="CHEBI:60519"/>
    </ligand>
</feature>
<feature type="binding site" evidence="1">
    <location>
        <position position="496"/>
    </location>
    <ligand>
        <name>hybrid [4Fe-2O-2S] cluster</name>
        <dbReference type="ChEBI" id="CHEBI:60519"/>
    </ligand>
</feature>
<feature type="modified residue" description="Cysteine persulfide" evidence="1">
    <location>
        <position position="407"/>
    </location>
</feature>
<name>HCP_ECOK1</name>
<proteinExistence type="inferred from homology"/>
<sequence>MIMFCVQCEQTIRTPAGNGCSYAQGMCGKTAETSDLQDLLIAALQGLSAWAVKAREYGIINHDVDSFAPRAFFSTLTNVNFDSPRIVGYAREAIALREALKAQCLAVDANARVDNPMADLQLVSDDLGELQRQAAEFTPNKDKAAIGENILGLRLLCLYGLKGAAAYMEHAHVLGQYDNDIYAQYHKIMAWLGTWPADMNALLECSMEIGQMNFKVMSILDAGETGKYGHPTPTQVNVKATAGKCILISGHDLKDLYNLLEQTEGTGVNVYTHGEMLPAHGYPELRKFKHLVGNYGSGWQNQQVEFARFPGPIVMTSNCIIDPTVGAYDDRIWTRSIVGWPGVRHLDGEDFSAVIAQAQQMAGFPYSEIPHLITVGFGRQTLLGAADTLIDLVSREKLRHIFLLGGCDGARGERHYFTDFATSVPDDCLILTLACGKYRFNKLEFGDIEGLPRLVDAGQCNDAYSAIILAVTLAEKLGCGVNDLPLSLVLSWFEQKAIVILLTLLSLGVKNIVTGPTAPGFLTPDLLAVLNEKFGLRSITTVEEDMKQLLSA</sequence>
<dbReference type="EC" id="1.7.99.1" evidence="1"/>
<dbReference type="EMBL" id="CP000468">
    <property type="protein sequence ID" value="ABJ00251.1"/>
    <property type="molecule type" value="Genomic_DNA"/>
</dbReference>
<dbReference type="SMR" id="A1A9B1"/>
<dbReference type="KEGG" id="ecv:APECO1_1221"/>
<dbReference type="HOGENOM" id="CLU_038344_2_0_6"/>
<dbReference type="Proteomes" id="UP000008216">
    <property type="component" value="Chromosome"/>
</dbReference>
<dbReference type="GO" id="GO:0005737">
    <property type="term" value="C:cytoplasm"/>
    <property type="evidence" value="ECO:0007669"/>
    <property type="project" value="UniProtKB-SubCell"/>
</dbReference>
<dbReference type="GO" id="GO:0051537">
    <property type="term" value="F:2 iron, 2 sulfur cluster binding"/>
    <property type="evidence" value="ECO:0007669"/>
    <property type="project" value="UniProtKB-KW"/>
</dbReference>
<dbReference type="GO" id="GO:0050418">
    <property type="term" value="F:hydroxylamine reductase activity"/>
    <property type="evidence" value="ECO:0007669"/>
    <property type="project" value="UniProtKB-UniRule"/>
</dbReference>
<dbReference type="GO" id="GO:0046872">
    <property type="term" value="F:metal ion binding"/>
    <property type="evidence" value="ECO:0007669"/>
    <property type="project" value="UniProtKB-KW"/>
</dbReference>
<dbReference type="GO" id="GO:0004601">
    <property type="term" value="F:peroxidase activity"/>
    <property type="evidence" value="ECO:0007669"/>
    <property type="project" value="TreeGrafter"/>
</dbReference>
<dbReference type="GO" id="GO:0042542">
    <property type="term" value="P:response to hydrogen peroxide"/>
    <property type="evidence" value="ECO:0007669"/>
    <property type="project" value="TreeGrafter"/>
</dbReference>
<dbReference type="CDD" id="cd01914">
    <property type="entry name" value="HCP"/>
    <property type="match status" value="1"/>
</dbReference>
<dbReference type="FunFam" id="1.20.1270.20:FF:000001">
    <property type="entry name" value="Hydroxylamine reductase"/>
    <property type="match status" value="1"/>
</dbReference>
<dbReference type="FunFam" id="1.20.1270.20:FF:000002">
    <property type="entry name" value="Hydroxylamine reductase"/>
    <property type="match status" value="1"/>
</dbReference>
<dbReference type="FunFam" id="3.40.50.2030:FF:000001">
    <property type="entry name" value="Hydroxylamine reductase"/>
    <property type="match status" value="1"/>
</dbReference>
<dbReference type="FunFam" id="3.40.50.2030:FF:000002">
    <property type="entry name" value="Hydroxylamine reductase"/>
    <property type="match status" value="1"/>
</dbReference>
<dbReference type="Gene3D" id="1.20.1270.20">
    <property type="match status" value="2"/>
</dbReference>
<dbReference type="Gene3D" id="3.40.50.2030">
    <property type="match status" value="2"/>
</dbReference>
<dbReference type="HAMAP" id="MF_00069">
    <property type="entry name" value="Hydroxylam_reduct"/>
    <property type="match status" value="1"/>
</dbReference>
<dbReference type="InterPro" id="IPR004137">
    <property type="entry name" value="HCP/CODH"/>
</dbReference>
<dbReference type="InterPro" id="IPR010048">
    <property type="entry name" value="Hydroxylam_reduct"/>
</dbReference>
<dbReference type="InterPro" id="IPR016099">
    <property type="entry name" value="Prismane-like_a/b-sand"/>
</dbReference>
<dbReference type="InterPro" id="IPR011254">
    <property type="entry name" value="Prismane-like_sf"/>
</dbReference>
<dbReference type="InterPro" id="IPR016100">
    <property type="entry name" value="Prismane_a-bundle"/>
</dbReference>
<dbReference type="NCBIfam" id="TIGR01703">
    <property type="entry name" value="hybrid_clust"/>
    <property type="match status" value="1"/>
</dbReference>
<dbReference type="NCBIfam" id="NF003658">
    <property type="entry name" value="PRK05290.1"/>
    <property type="match status" value="1"/>
</dbReference>
<dbReference type="PANTHER" id="PTHR30109">
    <property type="entry name" value="HYDROXYLAMINE REDUCTASE"/>
    <property type="match status" value="1"/>
</dbReference>
<dbReference type="PANTHER" id="PTHR30109:SF0">
    <property type="entry name" value="HYDROXYLAMINE REDUCTASE"/>
    <property type="match status" value="1"/>
</dbReference>
<dbReference type="Pfam" id="PF03063">
    <property type="entry name" value="Prismane"/>
    <property type="match status" value="1"/>
</dbReference>
<dbReference type="PIRSF" id="PIRSF000076">
    <property type="entry name" value="HCP"/>
    <property type="match status" value="1"/>
</dbReference>
<dbReference type="SUPFAM" id="SSF56821">
    <property type="entry name" value="Prismane protein-like"/>
    <property type="match status" value="1"/>
</dbReference>